<proteinExistence type="inferred from homology"/>
<reference key="1">
    <citation type="submission" date="2006-08" db="EMBL/GenBank/DDBJ databases">
        <title>Complete sequence of Alkalilimnicola ehrilichei MLHE-1.</title>
        <authorList>
            <person name="Copeland A."/>
            <person name="Lucas S."/>
            <person name="Lapidus A."/>
            <person name="Barry K."/>
            <person name="Detter J.C."/>
            <person name="Glavina del Rio T."/>
            <person name="Hammon N."/>
            <person name="Israni S."/>
            <person name="Dalin E."/>
            <person name="Tice H."/>
            <person name="Pitluck S."/>
            <person name="Sims D."/>
            <person name="Brettin T."/>
            <person name="Bruce D."/>
            <person name="Han C."/>
            <person name="Tapia R."/>
            <person name="Gilna P."/>
            <person name="Schmutz J."/>
            <person name="Larimer F."/>
            <person name="Land M."/>
            <person name="Hauser L."/>
            <person name="Kyrpides N."/>
            <person name="Mikhailova N."/>
            <person name="Oremland R.S."/>
            <person name="Hoeft S.E."/>
            <person name="Switzer-Blum J."/>
            <person name="Kulp T."/>
            <person name="King G."/>
            <person name="Tabita R."/>
            <person name="Witte B."/>
            <person name="Santini J.M."/>
            <person name="Basu P."/>
            <person name="Hollibaugh J.T."/>
            <person name="Xie G."/>
            <person name="Stolz J.F."/>
            <person name="Richardson P."/>
        </authorList>
    </citation>
    <scope>NUCLEOTIDE SEQUENCE [LARGE SCALE GENOMIC DNA]</scope>
    <source>
        <strain>ATCC BAA-1101 / DSM 17681 / MLHE-1</strain>
    </source>
</reference>
<keyword id="KW-0012">Acyltransferase</keyword>
<keyword id="KW-0963">Cytoplasm</keyword>
<keyword id="KW-0441">Lipid A biosynthesis</keyword>
<keyword id="KW-0444">Lipid biosynthesis</keyword>
<keyword id="KW-0443">Lipid metabolism</keyword>
<keyword id="KW-1185">Reference proteome</keyword>
<keyword id="KW-0677">Repeat</keyword>
<keyword id="KW-0808">Transferase</keyword>
<evidence type="ECO:0000255" key="1">
    <source>
        <dbReference type="HAMAP-Rule" id="MF_00387"/>
    </source>
</evidence>
<name>LPXA_ALKEH</name>
<accession>Q0A7J1</accession>
<dbReference type="EC" id="2.3.1.129" evidence="1"/>
<dbReference type="EMBL" id="CP000453">
    <property type="protein sequence ID" value="ABI57196.1"/>
    <property type="molecule type" value="Genomic_DNA"/>
</dbReference>
<dbReference type="RefSeq" id="WP_011629590.1">
    <property type="nucleotide sequence ID" value="NC_008340.1"/>
</dbReference>
<dbReference type="SMR" id="Q0A7J1"/>
<dbReference type="KEGG" id="aeh:Mlg_1852"/>
<dbReference type="eggNOG" id="COG1043">
    <property type="taxonomic scope" value="Bacteria"/>
</dbReference>
<dbReference type="HOGENOM" id="CLU_061249_0_0_6"/>
<dbReference type="OrthoDB" id="9807278at2"/>
<dbReference type="UniPathway" id="UPA00359">
    <property type="reaction ID" value="UER00477"/>
</dbReference>
<dbReference type="Proteomes" id="UP000001962">
    <property type="component" value="Chromosome"/>
</dbReference>
<dbReference type="GO" id="GO:0005737">
    <property type="term" value="C:cytoplasm"/>
    <property type="evidence" value="ECO:0007669"/>
    <property type="project" value="UniProtKB-SubCell"/>
</dbReference>
<dbReference type="GO" id="GO:0016020">
    <property type="term" value="C:membrane"/>
    <property type="evidence" value="ECO:0007669"/>
    <property type="project" value="GOC"/>
</dbReference>
<dbReference type="GO" id="GO:0008780">
    <property type="term" value="F:acyl-[acyl-carrier-protein]-UDP-N-acetylglucosamine O-acyltransferase activity"/>
    <property type="evidence" value="ECO:0007669"/>
    <property type="project" value="UniProtKB-UniRule"/>
</dbReference>
<dbReference type="GO" id="GO:0009245">
    <property type="term" value="P:lipid A biosynthetic process"/>
    <property type="evidence" value="ECO:0007669"/>
    <property type="project" value="UniProtKB-UniRule"/>
</dbReference>
<dbReference type="CDD" id="cd03351">
    <property type="entry name" value="LbH_UDP-GlcNAc_AT"/>
    <property type="match status" value="1"/>
</dbReference>
<dbReference type="Gene3D" id="2.160.10.10">
    <property type="entry name" value="Hexapeptide repeat proteins"/>
    <property type="match status" value="1"/>
</dbReference>
<dbReference type="Gene3D" id="1.20.1180.10">
    <property type="entry name" value="Udp N-acetylglucosamine O-acyltransferase, C-terminal domain"/>
    <property type="match status" value="1"/>
</dbReference>
<dbReference type="HAMAP" id="MF_00387">
    <property type="entry name" value="LpxA"/>
    <property type="match status" value="1"/>
</dbReference>
<dbReference type="InterPro" id="IPR029098">
    <property type="entry name" value="Acetyltransf_C"/>
</dbReference>
<dbReference type="InterPro" id="IPR037157">
    <property type="entry name" value="Acetyltransf_C_sf"/>
</dbReference>
<dbReference type="InterPro" id="IPR001451">
    <property type="entry name" value="Hexapep"/>
</dbReference>
<dbReference type="InterPro" id="IPR018357">
    <property type="entry name" value="Hexapep_transf_CS"/>
</dbReference>
<dbReference type="InterPro" id="IPR010137">
    <property type="entry name" value="Lipid_A_LpxA"/>
</dbReference>
<dbReference type="InterPro" id="IPR011004">
    <property type="entry name" value="Trimer_LpxA-like_sf"/>
</dbReference>
<dbReference type="NCBIfam" id="TIGR01852">
    <property type="entry name" value="lipid_A_lpxA"/>
    <property type="match status" value="1"/>
</dbReference>
<dbReference type="NCBIfam" id="NF003657">
    <property type="entry name" value="PRK05289.1"/>
    <property type="match status" value="1"/>
</dbReference>
<dbReference type="PANTHER" id="PTHR43480">
    <property type="entry name" value="ACYL-[ACYL-CARRIER-PROTEIN]--UDP-N-ACETYLGLUCOSAMINE O-ACYLTRANSFERASE"/>
    <property type="match status" value="1"/>
</dbReference>
<dbReference type="PANTHER" id="PTHR43480:SF1">
    <property type="entry name" value="ACYL-[ACYL-CARRIER-PROTEIN]--UDP-N-ACETYLGLUCOSAMINE O-ACYLTRANSFERASE, MITOCHONDRIAL-RELATED"/>
    <property type="match status" value="1"/>
</dbReference>
<dbReference type="Pfam" id="PF13720">
    <property type="entry name" value="Acetyltransf_11"/>
    <property type="match status" value="1"/>
</dbReference>
<dbReference type="Pfam" id="PF00132">
    <property type="entry name" value="Hexapep"/>
    <property type="match status" value="1"/>
</dbReference>
<dbReference type="PIRSF" id="PIRSF000456">
    <property type="entry name" value="UDP-GlcNAc_acltr"/>
    <property type="match status" value="1"/>
</dbReference>
<dbReference type="SUPFAM" id="SSF51161">
    <property type="entry name" value="Trimeric LpxA-like enzymes"/>
    <property type="match status" value="1"/>
</dbReference>
<dbReference type="PROSITE" id="PS00101">
    <property type="entry name" value="HEXAPEP_TRANSFERASES"/>
    <property type="match status" value="1"/>
</dbReference>
<feature type="chain" id="PRO_0000302560" description="Acyl-[acyl-carrier-protein]--UDP-N-acetylglucosamine O-acyltransferase">
    <location>
        <begin position="1"/>
        <end position="258"/>
    </location>
</feature>
<sequence>MTRIDPKAVVDPSAELDEGVTVGPFTVIGPDVQVGAGTRVGPHVVINGPTRLGRNNRIHPFASIGDDPQDKKYAGEPTRLEIGDDNVIREYVTLNRGTPEAGGLTRLGDRNWIMAYSHVAHDCRLGNDITFANSASLAGHVDVEDHAILGGFALVHQFCRIGAYAFCGFGSVINRDVLPFTTVSGHMAQPHGINVVGLRRHGMGPERIRELKRAYRLIFKSGKRLDDALEELRLLGKENPDLEHLAAFIAASNRGILR</sequence>
<comment type="function">
    <text evidence="1">Involved in the biosynthesis of lipid A, a phosphorylated glycolipid that anchors the lipopolysaccharide to the outer membrane of the cell.</text>
</comment>
<comment type="catalytic activity">
    <reaction evidence="1">
        <text>a (3R)-hydroxyacyl-[ACP] + UDP-N-acetyl-alpha-D-glucosamine = a UDP-3-O-[(3R)-3-hydroxyacyl]-N-acetyl-alpha-D-glucosamine + holo-[ACP]</text>
        <dbReference type="Rhea" id="RHEA:67812"/>
        <dbReference type="Rhea" id="RHEA-COMP:9685"/>
        <dbReference type="Rhea" id="RHEA-COMP:9945"/>
        <dbReference type="ChEBI" id="CHEBI:57705"/>
        <dbReference type="ChEBI" id="CHEBI:64479"/>
        <dbReference type="ChEBI" id="CHEBI:78827"/>
        <dbReference type="ChEBI" id="CHEBI:173225"/>
        <dbReference type="EC" id="2.3.1.129"/>
    </reaction>
</comment>
<comment type="pathway">
    <text evidence="1">Glycolipid biosynthesis; lipid IV(A) biosynthesis; lipid IV(A) from (3R)-3-hydroxytetradecanoyl-[acyl-carrier-protein] and UDP-N-acetyl-alpha-D-glucosamine: step 1/6.</text>
</comment>
<comment type="subunit">
    <text evidence="1">Homotrimer.</text>
</comment>
<comment type="subcellular location">
    <subcellularLocation>
        <location evidence="1">Cytoplasm</location>
    </subcellularLocation>
</comment>
<comment type="similarity">
    <text evidence="1">Belongs to the transferase hexapeptide repeat family. LpxA subfamily.</text>
</comment>
<protein>
    <recommendedName>
        <fullName evidence="1">Acyl-[acyl-carrier-protein]--UDP-N-acetylglucosamine O-acyltransferase</fullName>
        <shortName evidence="1">UDP-N-acetylglucosamine acyltransferase</shortName>
        <ecNumber evidence="1">2.3.1.129</ecNumber>
    </recommendedName>
</protein>
<gene>
    <name evidence="1" type="primary">lpxA</name>
    <name type="ordered locus">Mlg_1852</name>
</gene>
<organism>
    <name type="scientific">Alkalilimnicola ehrlichii (strain ATCC BAA-1101 / DSM 17681 / MLHE-1)</name>
    <dbReference type="NCBI Taxonomy" id="187272"/>
    <lineage>
        <taxon>Bacteria</taxon>
        <taxon>Pseudomonadati</taxon>
        <taxon>Pseudomonadota</taxon>
        <taxon>Gammaproteobacteria</taxon>
        <taxon>Chromatiales</taxon>
        <taxon>Ectothiorhodospiraceae</taxon>
        <taxon>Alkalilimnicola</taxon>
    </lineage>
</organism>